<reference key="1">
    <citation type="journal article" date="1995" name="J. Biol. Chem.">
        <title>Molecular cloning, expression, chromosomal assignment, and tissue-specific expression of a murine alpha-(1,3)-fucosyltransferase locus corresponding to the human ELAM-1 ligand fucosyl transferase.</title>
        <authorList>
            <person name="Gersten K.M."/>
            <person name="Natsuka S."/>
            <person name="Trinchera M."/>
            <person name="Petryniak B."/>
            <person name="Kelly R.J."/>
            <person name="Hiraiwa N."/>
            <person name="Jenkins N.A."/>
            <person name="Gilbert D.J."/>
            <person name="Copeland N.G."/>
            <person name="Lowe J.B."/>
        </authorList>
    </citation>
    <scope>NUCLEOTIDE SEQUENCE [GENOMIC DNA]</scope>
</reference>
<reference key="2">
    <citation type="journal article" date="1996" name="J. Biochem.">
        <title>Molecular cloning and expression of a mouse alpha-1,3 fucosyltransferase gene that shows homology with the human alpha-1,3 fucosyltransferase IV gene.</title>
        <authorList>
            <person name="Ozawa M."/>
            <person name="Muramatsu T."/>
        </authorList>
    </citation>
    <scope>NUCLEOTIDE SEQUENCE [GENOMIC DNA / MRNA] (ISOFORM SHORT)</scope>
    <source>
        <strain>129/Sv</strain>
        <tissue>Liver</tissue>
    </source>
</reference>
<reference key="3">
    <citation type="journal article" date="2001" name="Immunity">
        <title>The alpha(1,3)fucosyltransferases FucT-IV and FucT-VII exert collaborative control over selectin-dependent leukocyte recruitment and lymphocyte homing.</title>
        <authorList>
            <person name="Homeister J.W."/>
            <person name="Thall A.D."/>
            <person name="Petryniak B."/>
            <person name="Maly P."/>
            <person name="Rogers C.E."/>
            <person name="Smith P.L."/>
            <person name="Kelly R.J."/>
            <person name="Gersten K.M."/>
            <person name="Askari S.W."/>
            <person name="Cheng G."/>
            <person name="Smithson G."/>
            <person name="Marks R.M."/>
            <person name="Misra A.K."/>
            <person name="Hindsgaul O."/>
            <person name="von Andrian U.H."/>
            <person name="Lowe J.B."/>
        </authorList>
    </citation>
    <scope>FUNCTION</scope>
    <scope>CATALYTIC ACTIVITY</scope>
    <scope>PATHWAY</scope>
    <scope>DISRUPTION PHENOTYPE</scope>
</reference>
<name>FUT4_MOUSE</name>
<protein>
    <recommendedName>
        <fullName>Alpha-(1,3)-fucosyltransferase 4</fullName>
    </recommendedName>
    <alternativeName>
        <fullName>4-galactosyl-N-acetylglucosaminide 3-alpha-L-fucosyltransferase</fullName>
        <ecNumber evidence="3">2.4.1.152</ecNumber>
    </alternativeName>
    <alternativeName>
        <fullName>Fucosyltransferase 4</fullName>
    </alternativeName>
    <alternativeName>
        <fullName>Fucosyltransferase IV</fullName>
        <shortName>Fuc-TIV</shortName>
        <shortName>FucT-IV</shortName>
    </alternativeName>
    <alternativeName>
        <fullName>Galactoside 3-L-fucosyltransferase</fullName>
    </alternativeName>
</protein>
<proteinExistence type="evidence at protein level"/>
<dbReference type="EC" id="2.4.1.152" evidence="3"/>
<dbReference type="EMBL" id="U33457">
    <property type="protein sequence ID" value="AAC52269.1"/>
    <property type="molecule type" value="Genomic_DNA"/>
</dbReference>
<dbReference type="EMBL" id="D63380">
    <property type="protein sequence ID" value="BAA09697.1"/>
    <property type="molecule type" value="Genomic_DNA"/>
</dbReference>
<dbReference type="EMBL" id="D63379">
    <property type="protein sequence ID" value="BAA09696.1"/>
    <property type="molecule type" value="mRNA"/>
</dbReference>
<dbReference type="CCDS" id="CCDS22825.1">
    <molecule id="Q11127-1"/>
</dbReference>
<dbReference type="PIR" id="A57596">
    <property type="entry name" value="A57596"/>
</dbReference>
<dbReference type="RefSeq" id="NP_034372.1">
    <molecule id="Q11127-1"/>
    <property type="nucleotide sequence ID" value="NM_010242.3"/>
</dbReference>
<dbReference type="SMR" id="Q11127"/>
<dbReference type="FunCoup" id="Q11127">
    <property type="interactions" value="138"/>
</dbReference>
<dbReference type="IntAct" id="Q11127">
    <property type="interactions" value="1"/>
</dbReference>
<dbReference type="STRING" id="10090.ENSMUSP00000053027"/>
<dbReference type="CAZy" id="GT10">
    <property type="family name" value="Glycosyltransferase Family 10"/>
</dbReference>
<dbReference type="GlyCosmos" id="Q11127">
    <property type="glycosylation" value="2 sites, No reported glycans"/>
</dbReference>
<dbReference type="GlyGen" id="Q11127">
    <property type="glycosylation" value="2 sites"/>
</dbReference>
<dbReference type="iPTMnet" id="Q11127"/>
<dbReference type="PhosphoSitePlus" id="Q11127"/>
<dbReference type="PaxDb" id="10090-ENSMUSP00000053027"/>
<dbReference type="ProteomicsDB" id="271811">
    <molecule id="Q11127-1"/>
</dbReference>
<dbReference type="ProteomicsDB" id="271812">
    <molecule id="Q11127-2"/>
</dbReference>
<dbReference type="Antibodypedia" id="3496">
    <property type="antibodies" value="2082 antibodies from 47 providers"/>
</dbReference>
<dbReference type="DNASU" id="14345"/>
<dbReference type="Ensembl" id="ENSMUST00000061498.7">
    <molecule id="Q11127-1"/>
    <property type="protein sequence ID" value="ENSMUSP00000053027.6"/>
    <property type="gene ID" value="ENSMUSG00000049307.7"/>
</dbReference>
<dbReference type="GeneID" id="14345"/>
<dbReference type="KEGG" id="mmu:14345"/>
<dbReference type="UCSC" id="uc009oew.1">
    <molecule id="Q11127-1"/>
    <property type="organism name" value="mouse"/>
</dbReference>
<dbReference type="AGR" id="MGI:95594"/>
<dbReference type="CTD" id="2526"/>
<dbReference type="MGI" id="MGI:95594">
    <property type="gene designation" value="Fut4"/>
</dbReference>
<dbReference type="VEuPathDB" id="HostDB:ENSMUSG00000049307"/>
<dbReference type="eggNOG" id="KOG2619">
    <property type="taxonomic scope" value="Eukaryota"/>
</dbReference>
<dbReference type="GeneTree" id="ENSGT00940000162506"/>
<dbReference type="HOGENOM" id="CLU_032075_4_0_1"/>
<dbReference type="InParanoid" id="Q11127"/>
<dbReference type="OMA" id="QLWVWMN"/>
<dbReference type="OrthoDB" id="427096at2759"/>
<dbReference type="PhylomeDB" id="Q11127"/>
<dbReference type="TreeFam" id="TF316348"/>
<dbReference type="BRENDA" id="2.4.1.152">
    <property type="organism ID" value="3474"/>
</dbReference>
<dbReference type="Reactome" id="R-MMU-9037629">
    <property type="pathway name" value="Lewis blood group biosynthesis"/>
</dbReference>
<dbReference type="UniPathway" id="UPA00378"/>
<dbReference type="BioGRID-ORCS" id="14345">
    <property type="hits" value="1 hit in 79 CRISPR screens"/>
</dbReference>
<dbReference type="ChiTaRS" id="Fut4">
    <property type="organism name" value="mouse"/>
</dbReference>
<dbReference type="PRO" id="PR:Q11127"/>
<dbReference type="Proteomes" id="UP000000589">
    <property type="component" value="Chromosome 9"/>
</dbReference>
<dbReference type="RNAct" id="Q11127">
    <property type="molecule type" value="protein"/>
</dbReference>
<dbReference type="Bgee" id="ENSMUSG00000049307">
    <property type="expression patterns" value="Expressed in left colon and 120 other cell types or tissues"/>
</dbReference>
<dbReference type="ExpressionAtlas" id="Q11127">
    <property type="expression patterns" value="baseline and differential"/>
</dbReference>
<dbReference type="GO" id="GO:0071944">
    <property type="term" value="C:cell periphery"/>
    <property type="evidence" value="ECO:0000314"/>
    <property type="project" value="MGI"/>
</dbReference>
<dbReference type="GO" id="GO:0009986">
    <property type="term" value="C:cell surface"/>
    <property type="evidence" value="ECO:0000314"/>
    <property type="project" value="MGI"/>
</dbReference>
<dbReference type="GO" id="GO:0032580">
    <property type="term" value="C:Golgi cisterna membrane"/>
    <property type="evidence" value="ECO:0007669"/>
    <property type="project" value="UniProtKB-SubCell"/>
</dbReference>
<dbReference type="GO" id="GO:0005802">
    <property type="term" value="C:trans-Golgi network"/>
    <property type="evidence" value="ECO:0000250"/>
    <property type="project" value="UniProtKB"/>
</dbReference>
<dbReference type="GO" id="GO:0017083">
    <property type="term" value="F:4-galactosyl-N-acetylglucosaminide 3-alpha-L-fucosyltransferase activity"/>
    <property type="evidence" value="ECO:0000250"/>
    <property type="project" value="UniProtKB"/>
</dbReference>
<dbReference type="GO" id="GO:0046920">
    <property type="term" value="F:alpha-(1-&gt;3)-fucosyltransferase activity"/>
    <property type="evidence" value="ECO:0000314"/>
    <property type="project" value="UniProtKB"/>
</dbReference>
<dbReference type="GO" id="GO:0006688">
    <property type="term" value="P:glycosphingolipid biosynthetic process"/>
    <property type="evidence" value="ECO:0000250"/>
    <property type="project" value="UniProtKB"/>
</dbReference>
<dbReference type="GO" id="GO:0006954">
    <property type="term" value="P:inflammatory response"/>
    <property type="evidence" value="ECO:0007669"/>
    <property type="project" value="UniProtKB-KW"/>
</dbReference>
<dbReference type="GO" id="GO:0106402">
    <property type="term" value="P:Lewis x epitope biosynthetic process"/>
    <property type="evidence" value="ECO:0000250"/>
    <property type="project" value="UniProtKB"/>
</dbReference>
<dbReference type="GO" id="GO:0097022">
    <property type="term" value="P:lymphocyte migration into lymph node"/>
    <property type="evidence" value="ECO:0000315"/>
    <property type="project" value="UniProtKB"/>
</dbReference>
<dbReference type="GO" id="GO:0009311">
    <property type="term" value="P:oligosaccharide metabolic process"/>
    <property type="evidence" value="ECO:0000250"/>
    <property type="project" value="UniProtKB"/>
</dbReference>
<dbReference type="GO" id="GO:1903238">
    <property type="term" value="P:positive regulation of leukocyte tethering or rolling"/>
    <property type="evidence" value="ECO:0000315"/>
    <property type="project" value="UniProtKB"/>
</dbReference>
<dbReference type="GO" id="GO:1902624">
    <property type="term" value="P:positive regulation of neutrophil migration"/>
    <property type="evidence" value="ECO:0000315"/>
    <property type="project" value="UniProtKB"/>
</dbReference>
<dbReference type="GO" id="GO:0006487">
    <property type="term" value="P:protein N-linked glycosylation"/>
    <property type="evidence" value="ECO:0000250"/>
    <property type="project" value="UniProtKB"/>
</dbReference>
<dbReference type="GO" id="GO:0006493">
    <property type="term" value="P:protein O-linked glycosylation"/>
    <property type="evidence" value="ECO:0000250"/>
    <property type="project" value="UniProtKB"/>
</dbReference>
<dbReference type="GO" id="GO:1903037">
    <property type="term" value="P:regulation of leukocyte cell-cell adhesion"/>
    <property type="evidence" value="ECO:0000250"/>
    <property type="project" value="UniProtKB"/>
</dbReference>
<dbReference type="FunFam" id="3.40.50.11660:FF:000001">
    <property type="entry name" value="alpha-(1,3)-fucosyltransferase 9"/>
    <property type="match status" value="1"/>
</dbReference>
<dbReference type="Gene3D" id="3.40.50.11660">
    <property type="entry name" value="Glycosyl transferase family 10, C-terminal domain"/>
    <property type="match status" value="1"/>
</dbReference>
<dbReference type="InterPro" id="IPR055270">
    <property type="entry name" value="Glyco_tran_10_C"/>
</dbReference>
<dbReference type="InterPro" id="IPR031481">
    <property type="entry name" value="Glyco_tran_10_N"/>
</dbReference>
<dbReference type="InterPro" id="IPR001503">
    <property type="entry name" value="Glyco_trans_10"/>
</dbReference>
<dbReference type="InterPro" id="IPR038577">
    <property type="entry name" value="GT10-like_C_sf"/>
</dbReference>
<dbReference type="PANTHER" id="PTHR11929">
    <property type="entry name" value="ALPHA- 1,3 -FUCOSYLTRANSFERASE"/>
    <property type="match status" value="1"/>
</dbReference>
<dbReference type="PANTHER" id="PTHR11929:SF132">
    <property type="entry name" value="ALPHA-(1,3)-FUCOSYLTRANSFERASE 4"/>
    <property type="match status" value="1"/>
</dbReference>
<dbReference type="Pfam" id="PF17039">
    <property type="entry name" value="Glyco_tran_10_N"/>
    <property type="match status" value="1"/>
</dbReference>
<dbReference type="Pfam" id="PF00852">
    <property type="entry name" value="Glyco_transf_10"/>
    <property type="match status" value="1"/>
</dbReference>
<dbReference type="SUPFAM" id="SSF53756">
    <property type="entry name" value="UDP-Glycosyltransferase/glycogen phosphorylase"/>
    <property type="match status" value="1"/>
</dbReference>
<sequence>MAPARQELQHESRCRPSRTVDAWRAAVATRGRHMETPGYRRRTRCGGWGLPRSVSSLAAVGLLCTALTTFICWGQLPPLPWASPAPQRLVGVLLWWEPFRGRGGYPKSPPDCSLRFNISGCRLLTDRAAYGEAQAVLFHHRDLVKELHDWPPPWGARERTDKALVLRVFDDQEGAVTLTGKALETVGSRPPGQRWVWMNFESPSHTPGLRGLAKDLFNWTLSYRTDSDVFVPYGFLYSRSDPTEQPSGLGPQLARKRGLVAWVVSNWNEHQARVRYYHQLSRHVSVDVFGRTGPGRPVPAIGLLHTVARYKFYLAFENSRHVDYITEKLWRNAFLAGAVPVVLGPDRANYERFVPRGAFIHVDDFPNAASLAAYLLFLDRNVAVYRRYFRWRRSFAVHITSFWDEQWCRTCQAVQTSGDQPKSIHNLADWFQR</sequence>
<keyword id="KW-0025">Alternative splicing</keyword>
<keyword id="KW-0325">Glycoprotein</keyword>
<keyword id="KW-0328">Glycosyltransferase</keyword>
<keyword id="KW-0333">Golgi apparatus</keyword>
<keyword id="KW-0395">Inflammatory response</keyword>
<keyword id="KW-0472">Membrane</keyword>
<keyword id="KW-1185">Reference proteome</keyword>
<keyword id="KW-0735">Signal-anchor</keyword>
<keyword id="KW-0808">Transferase</keyword>
<keyword id="KW-0812">Transmembrane</keyword>
<keyword id="KW-1133">Transmembrane helix</keyword>
<accession>Q11127</accession>
<feature type="chain" id="PRO_0000221101" description="Alpha-(1,3)-fucosyltransferase 4">
    <location>
        <begin position="1"/>
        <end position="433"/>
    </location>
</feature>
<feature type="topological domain" description="Cytoplasmic" evidence="2">
    <location>
        <begin position="1"/>
        <end position="52"/>
    </location>
</feature>
<feature type="transmembrane region" description="Helical; Signal-anchor for type II membrane protein" evidence="2">
    <location>
        <begin position="53"/>
        <end position="74"/>
    </location>
</feature>
<feature type="topological domain" description="Lumenal" evidence="2">
    <location>
        <begin position="75"/>
        <end position="433"/>
    </location>
</feature>
<feature type="glycosylation site" description="N-linked (GlcNAc...) asparagine" evidence="2">
    <location>
        <position position="117"/>
    </location>
</feature>
<feature type="glycosylation site" description="N-linked (GlcNAc...) asparagine" evidence="2">
    <location>
        <position position="218"/>
    </location>
</feature>
<feature type="splice variant" id="VSP_001778" description="In isoform Short." evidence="4">
    <location>
        <begin position="1"/>
        <end position="33"/>
    </location>
</feature>
<feature type="sequence conflict" description="In Ref. 2; BAA09697." evidence="5" ref="2">
    <original>Q</original>
    <variation>P</variation>
    <location>
        <position position="252"/>
    </location>
</feature>
<feature type="sequence conflict" description="In Ref. 2; BAA09697." evidence="5" ref="2">
    <original>R</original>
    <variation>Q</variation>
    <location>
        <position position="257"/>
    </location>
</feature>
<feature type="sequence conflict" description="In Ref. 2; BAA09697." evidence="5" ref="2">
    <original>V</original>
    <variation>E</variation>
    <location>
        <position position="260"/>
    </location>
</feature>
<feature type="sequence conflict" description="In Ref. 2; BAA09697." evidence="5" ref="2">
    <original>R</original>
    <variation>Q</variation>
    <location>
        <position position="273"/>
    </location>
</feature>
<organism>
    <name type="scientific">Mus musculus</name>
    <name type="common">Mouse</name>
    <dbReference type="NCBI Taxonomy" id="10090"/>
    <lineage>
        <taxon>Eukaryota</taxon>
        <taxon>Metazoa</taxon>
        <taxon>Chordata</taxon>
        <taxon>Craniata</taxon>
        <taxon>Vertebrata</taxon>
        <taxon>Euteleostomi</taxon>
        <taxon>Mammalia</taxon>
        <taxon>Eutheria</taxon>
        <taxon>Euarchontoglires</taxon>
        <taxon>Glires</taxon>
        <taxon>Rodentia</taxon>
        <taxon>Myomorpha</taxon>
        <taxon>Muroidea</taxon>
        <taxon>Muridae</taxon>
        <taxon>Murinae</taxon>
        <taxon>Mus</taxon>
        <taxon>Mus</taxon>
    </lineage>
</organism>
<comment type="function">
    <text evidence="1 3">Catalyzes alpha(1-&gt;3) linkage of fucosyl moiety transferred from GDP-beta-L-fucose to N-acetyl glucosamine (GlcNAc) within type 2 lactosamine (LacNAc, Gal-beta(1-&gt;4)GlcNAc) glycan attached to N- or O-linked glycoproteins (PubMed:11485743). Robustly fucosylates nonsialylated distal LacNAc unit of the polylactosamine chain to form Lewis X antigen (CD15), a glycan determinant known to mediate important cellular functions in development and immunity. Fucosylates with lower efficiency sialylated LacNAc acceptors to form sialyl Lewis X and 6-sulfo sialyl Lewis X determinants that serve as recognition epitopes for C-type lectins (PubMed:11485743). Together with FUT7 contributes to SELE, SELL and SELP selectin ligand biosynthesis and selectin-dependent lymphocyte homing, leukocyte migration and blood leukocyte homeostasis (PubMed:11485743). In a cell type specific manner, may also fucosylate the internal LacNAc unit of the polylactosamine chain to form VIM-2 antigen that serves as recognition epitope for SELE (By similarity).</text>
</comment>
<comment type="catalytic activity">
    <reaction evidence="3">
        <text>a beta-D-galactosyl-(1-&gt;4)-N-acetyl-beta-D-glucosaminyl derivative + GDP-beta-L-fucose = a beta-D-galactosyl-(1-&gt;4)-[alpha-L-fucosyl-(1-&gt;3)]-N-acetyl-beta-D-glucosaminyl derivative + GDP + H(+)</text>
        <dbReference type="Rhea" id="RHEA:14257"/>
        <dbReference type="ChEBI" id="CHEBI:15378"/>
        <dbReference type="ChEBI" id="CHEBI:57273"/>
        <dbReference type="ChEBI" id="CHEBI:58189"/>
        <dbReference type="ChEBI" id="CHEBI:133507"/>
        <dbReference type="ChEBI" id="CHEBI:137941"/>
        <dbReference type="EC" id="2.4.1.152"/>
    </reaction>
    <physiologicalReaction direction="left-to-right" evidence="3">
        <dbReference type="Rhea" id="RHEA:14258"/>
    </physiologicalReaction>
</comment>
<comment type="catalytic activity">
    <reaction evidence="3">
        <text>an N-acetyl-alpha-neuraminyl-(2-&gt;3)-beta-D-galactosyl-(1-&gt;4)-N-acetyl-beta-D-glucosaminyl derivative + GDP-beta-L-fucose = an alpha-Neu5Ac-(2-&gt;3)-beta-D-Gal-(1-&gt;4)-[alpha-L-Fuc-(1-&gt;3)]-beta-D-GlcNAc derivative + GDP + H(+)</text>
        <dbReference type="Rhea" id="RHEA:56076"/>
        <dbReference type="ChEBI" id="CHEBI:15378"/>
        <dbReference type="ChEBI" id="CHEBI:57273"/>
        <dbReference type="ChEBI" id="CHEBI:58189"/>
        <dbReference type="ChEBI" id="CHEBI:136545"/>
        <dbReference type="ChEBI" id="CHEBI:139509"/>
    </reaction>
    <physiologicalReaction direction="left-to-right" evidence="3">
        <dbReference type="Rhea" id="RHEA:56077"/>
    </physiologicalReaction>
</comment>
<comment type="catalytic activity">
    <reaction evidence="1">
        <text>an alpha-Neu5Ac-(2-&gt;3)-beta-D-Gal-(1-&gt;4)-beta-D-GlcNAc-(1-&gt;3)-beta-D-Gal-(1-&gt;4)-beta-D-GlcNAc derivative + GDP-beta-L-fucose = an alpha-Neu5Ac-(2-&gt;3)-beta-D-Gal-(1-&gt;4)-beta-D-GlcNAc-(1-&gt;3)-beta-D-Gal-(1-&gt;4)-[alpha-L-Fuc-(1-&gt;3)]-beta-D-GlcNAc derivative + GDP + H(+)</text>
        <dbReference type="Rhea" id="RHEA:68044"/>
        <dbReference type="ChEBI" id="CHEBI:15378"/>
        <dbReference type="ChEBI" id="CHEBI:57273"/>
        <dbReference type="ChEBI" id="CHEBI:58189"/>
        <dbReference type="ChEBI" id="CHEBI:145343"/>
        <dbReference type="ChEBI" id="CHEBI:176900"/>
    </reaction>
    <physiologicalReaction direction="left-to-right" evidence="1">
        <dbReference type="Rhea" id="RHEA:68045"/>
    </physiologicalReaction>
</comment>
<comment type="catalytic activity">
    <reaction evidence="3">
        <text>an alpha-Neu5Ac-(2-&gt;3)-beta-D-Gal-(1-&gt;4)-beta-D-GlcNAc6S derivative + GDP-beta-L-fucose = an alpha-Neu5Ac-(2-&gt;3)-beta-D-Gal-(1-&gt;4)-[alpha-L-Fuc-(1-&gt;3)]-beta-D-GlcNAc6S derivative + GDP + H(+)</text>
        <dbReference type="Rhea" id="RHEA:62004"/>
        <dbReference type="ChEBI" id="CHEBI:15378"/>
        <dbReference type="ChEBI" id="CHEBI:57273"/>
        <dbReference type="ChEBI" id="CHEBI:58189"/>
        <dbReference type="ChEBI" id="CHEBI:145344"/>
        <dbReference type="ChEBI" id="CHEBI:145345"/>
    </reaction>
    <physiologicalReaction direction="left-to-right" evidence="3">
        <dbReference type="Rhea" id="RHEA:62005"/>
    </physiologicalReaction>
</comment>
<comment type="pathway">
    <text evidence="3">Protein modification; protein glycosylation.</text>
</comment>
<comment type="subcellular location">
    <subcellularLocation>
        <location>Golgi apparatus</location>
        <location>Golgi stack membrane</location>
        <topology>Single-pass type II membrane protein</topology>
    </subcellularLocation>
    <text>Membrane-bound form in trans cisternae of Golgi.</text>
</comment>
<comment type="alternative products">
    <event type="alternative splicing"/>
    <isoform>
        <id>Q11127-1</id>
        <name>Long</name>
        <sequence type="displayed"/>
    </isoform>
    <isoform>
        <id>Q11127-2</id>
        <name>Short</name>
        <sequence type="described" ref="VSP_001778"/>
    </isoform>
</comment>
<comment type="tissue specificity">
    <text>Highest expression in stomach and colon. It is also expressed in the lung, testis, uterus, small intestine and to a lesser extent in spleen, and ovary. Present in trace amounts in brain, thymus, heart, smooth muscle, kidney and bone marrow. Not found in liver, salivary gland and pancreas.</text>
</comment>
<comment type="disruption phenotype">
    <text evidence="3">Mice are born at the expected Mendelian rate. No visible phenotype; likely due to the redundancy with FUT7. Simultaneous knockdown of FUT4 and FUT7 results in leukocytosis characterized by an 18.4 fold increase in blood neutrophils and significant increases in blood monocytes, eosinophils, and lymphocytes numbers.</text>
</comment>
<comment type="similarity">
    <text evidence="5">Belongs to the glycosyltransferase 10 family.</text>
</comment>
<comment type="online information" name="Functional Glycomics Gateway - GTase">
    <link uri="http://www.functionalglycomics.org/glycomics/molecule/jsp/glycoEnzyme/viewGlycoEnzyme.jsp?gbpId=gt_mou_613"/>
    <text>Fucosyltransferase 4</text>
</comment>
<gene>
    <name type="primary">Fut4</name>
    <name type="synonym">Elft</name>
</gene>
<evidence type="ECO:0000250" key="1">
    <source>
        <dbReference type="UniProtKB" id="P22083"/>
    </source>
</evidence>
<evidence type="ECO:0000255" key="2"/>
<evidence type="ECO:0000269" key="3">
    <source>
    </source>
</evidence>
<evidence type="ECO:0000303" key="4">
    <source>
    </source>
</evidence>
<evidence type="ECO:0000305" key="5"/>